<gene>
    <name type="primary">Iqsec2</name>
    <name type="synonym">Kiaa0522</name>
</gene>
<keyword id="KW-0175">Coiled coil</keyword>
<keyword id="KW-0963">Cytoplasm</keyword>
<keyword id="KW-0488">Methylation</keyword>
<keyword id="KW-0597">Phosphoprotein</keyword>
<keyword id="KW-1185">Reference proteome</keyword>
<reference key="1">
    <citation type="journal article" date="2009" name="PLoS Biol.">
        <title>Lineage-specific biology revealed by a finished genome assembly of the mouse.</title>
        <authorList>
            <person name="Church D.M."/>
            <person name="Goodstadt L."/>
            <person name="Hillier L.W."/>
            <person name="Zody M.C."/>
            <person name="Goldstein S."/>
            <person name="She X."/>
            <person name="Bult C.J."/>
            <person name="Agarwala R."/>
            <person name="Cherry J.L."/>
            <person name="DiCuccio M."/>
            <person name="Hlavina W."/>
            <person name="Kapustin Y."/>
            <person name="Meric P."/>
            <person name="Maglott D."/>
            <person name="Birtle Z."/>
            <person name="Marques A.C."/>
            <person name="Graves T."/>
            <person name="Zhou S."/>
            <person name="Teague B."/>
            <person name="Potamousis K."/>
            <person name="Churas C."/>
            <person name="Place M."/>
            <person name="Herschleb J."/>
            <person name="Runnheim R."/>
            <person name="Forrest D."/>
            <person name="Amos-Landgraf J."/>
            <person name="Schwartz D.C."/>
            <person name="Cheng Z."/>
            <person name="Lindblad-Toh K."/>
            <person name="Eichler E.E."/>
            <person name="Ponting C.P."/>
        </authorList>
    </citation>
    <scope>NUCLEOTIDE SEQUENCE [LARGE SCALE GENOMIC DNA]</scope>
    <source>
        <strain>C57BL/6J</strain>
    </source>
</reference>
<reference key="2">
    <citation type="submission" date="2005-02" db="EMBL/GenBank/DDBJ databases">
        <title>Prediction of the coding sequences of mouse homologues of KIAA gene. The complete nucleotide sequences of mouse KIAA-homologous cDNAs identified by screening of terminal sequences of cDNA clones randomly sampled from size-fractionated libraries.</title>
        <authorList>
            <person name="Okazaki N."/>
            <person name="Kikuno R.F."/>
            <person name="Ohara R."/>
            <person name="Inamoto S."/>
            <person name="Nagase T."/>
            <person name="Ohara O."/>
            <person name="Koga H."/>
        </authorList>
    </citation>
    <scope>NUCLEOTIDE SEQUENCE [LARGE SCALE MRNA] OF 833-1478</scope>
    <source>
        <tissue>Brain</tissue>
    </source>
</reference>
<reference key="3">
    <citation type="journal article" date="2006" name="Mol. Cell. Proteomics">
        <title>Comprehensive identification of phosphorylation sites in postsynaptic density preparations.</title>
        <authorList>
            <person name="Trinidad J.C."/>
            <person name="Specht C.G."/>
            <person name="Thalhammer A."/>
            <person name="Schoepfer R."/>
            <person name="Burlingame A.L."/>
        </authorList>
    </citation>
    <scope>PHOSPHORYLATION [LARGE SCALE ANALYSIS] AT SER-1148 AND SER-1151</scope>
    <scope>IDENTIFICATION BY MASS SPECTROMETRY [LARGE SCALE ANALYSIS]</scope>
    <source>
        <tissue>Brain</tissue>
    </source>
</reference>
<reference key="4">
    <citation type="journal article" date="2008" name="J. Proteome Res.">
        <title>Large-scale identification and evolution indexing of tyrosine phosphorylation sites from murine brain.</title>
        <authorList>
            <person name="Ballif B.A."/>
            <person name="Carey G.R."/>
            <person name="Sunyaev S.R."/>
            <person name="Gygi S.P."/>
        </authorList>
    </citation>
    <scope>PHOSPHORYLATION [LARGE SCALE ANALYSIS] AT TYR-1119</scope>
    <scope>IDENTIFICATION BY MASS SPECTROMETRY [LARGE SCALE ANALYSIS]</scope>
    <source>
        <tissue>Brain</tissue>
    </source>
</reference>
<reference key="5">
    <citation type="journal article" date="2009" name="Immunity">
        <title>The phagosomal proteome in interferon-gamma-activated macrophages.</title>
        <authorList>
            <person name="Trost M."/>
            <person name="English L."/>
            <person name="Lemieux S."/>
            <person name="Courcelles M."/>
            <person name="Desjardins M."/>
            <person name="Thibault P."/>
        </authorList>
    </citation>
    <scope>PHOSPHORYLATION [LARGE SCALE ANALYSIS] AT SER-383 AND SER-402</scope>
    <scope>IDENTIFICATION BY MASS SPECTROMETRY [LARGE SCALE ANALYSIS]</scope>
</reference>
<reference key="6">
    <citation type="journal article" date="2010" name="Cell">
        <title>A tissue-specific atlas of mouse protein phosphorylation and expression.</title>
        <authorList>
            <person name="Huttlin E.L."/>
            <person name="Jedrychowski M.P."/>
            <person name="Elias J.E."/>
            <person name="Goswami T."/>
            <person name="Rad R."/>
            <person name="Beausoleil S.A."/>
            <person name="Villen J."/>
            <person name="Haas W."/>
            <person name="Sowa M.E."/>
            <person name="Gygi S.P."/>
        </authorList>
    </citation>
    <scope>PHOSPHORYLATION [LARGE SCALE ANALYSIS] AT SER-82; SER-228; SER-383; SER-402; SER-491; SER-518; SER-597; SER-617; SER-731; SER-734; SER-1148; SER-1151; SER-1162 AND SER-1163</scope>
    <scope>IDENTIFICATION BY MASS SPECTROMETRY [LARGE SCALE ANALYSIS]</scope>
    <source>
        <tissue>Brain</tissue>
        <tissue>Brown adipose tissue</tissue>
        <tissue>Heart</tissue>
        <tissue>Kidney</tissue>
        <tissue>Lung</tissue>
        <tissue>Pancreas</tissue>
        <tissue>Spleen</tissue>
        <tissue>Testis</tissue>
    </source>
</reference>
<reference key="7">
    <citation type="journal article" date="2014" name="Mol. Cell. Proteomics">
        <title>Immunoaffinity enrichment and mass spectrometry analysis of protein methylation.</title>
        <authorList>
            <person name="Guo A."/>
            <person name="Gu H."/>
            <person name="Zhou J."/>
            <person name="Mulhern D."/>
            <person name="Wang Y."/>
            <person name="Lee K.A."/>
            <person name="Yang V."/>
            <person name="Aguiar M."/>
            <person name="Kornhauser J."/>
            <person name="Jia X."/>
            <person name="Ren J."/>
            <person name="Beausoleil S.A."/>
            <person name="Silva J.C."/>
            <person name="Vemulapalli V."/>
            <person name="Bedford M.T."/>
            <person name="Comb M.J."/>
        </authorList>
    </citation>
    <scope>METHYLATION [LARGE SCALE ANALYSIS] AT ARG-1335</scope>
    <scope>IDENTIFICATION BY MASS SPECTROMETRY [LARGE SCALE ANALYSIS]</scope>
    <source>
        <tissue>Brain</tissue>
    </source>
</reference>
<name>IQEC2_MOUSE</name>
<feature type="chain" id="PRO_0000245609" description="IQ motif and SEC7 domain-containing protein 2">
    <location>
        <begin position="1"/>
        <end position="1478"/>
    </location>
</feature>
<feature type="domain" description="IQ" evidence="3">
    <location>
        <begin position="337"/>
        <end position="366"/>
    </location>
</feature>
<feature type="domain" description="SEC7" evidence="4">
    <location>
        <begin position="736"/>
        <end position="929"/>
    </location>
</feature>
<feature type="domain" description="PH">
    <location>
        <begin position="941"/>
        <end position="1075"/>
    </location>
</feature>
<feature type="region of interest" description="Disordered" evidence="5">
    <location>
        <begin position="63"/>
        <end position="88"/>
    </location>
</feature>
<feature type="region of interest" description="Disordered" evidence="5">
    <location>
        <begin position="104"/>
        <end position="124"/>
    </location>
</feature>
<feature type="region of interest" description="Disordered" evidence="5">
    <location>
        <begin position="161"/>
        <end position="280"/>
    </location>
</feature>
<feature type="region of interest" description="Disordered" evidence="5">
    <location>
        <begin position="469"/>
        <end position="568"/>
    </location>
</feature>
<feature type="region of interest" description="Disordered" evidence="5">
    <location>
        <begin position="613"/>
        <end position="716"/>
    </location>
</feature>
<feature type="region of interest" description="Disordered" evidence="5">
    <location>
        <begin position="1081"/>
        <end position="1249"/>
    </location>
</feature>
<feature type="region of interest" description="Disordered" evidence="5">
    <location>
        <begin position="1261"/>
        <end position="1478"/>
    </location>
</feature>
<feature type="coiled-coil region" evidence="2">
    <location>
        <begin position="23"/>
        <end position="74"/>
    </location>
</feature>
<feature type="compositionally biased region" description="Basic and acidic residues" evidence="5">
    <location>
        <begin position="63"/>
        <end position="84"/>
    </location>
</feature>
<feature type="compositionally biased region" description="Basic and acidic residues" evidence="5">
    <location>
        <begin position="161"/>
        <end position="173"/>
    </location>
</feature>
<feature type="compositionally biased region" description="Low complexity" evidence="5">
    <location>
        <begin position="206"/>
        <end position="215"/>
    </location>
</feature>
<feature type="compositionally biased region" description="Low complexity" evidence="5">
    <location>
        <begin position="222"/>
        <end position="232"/>
    </location>
</feature>
<feature type="compositionally biased region" description="Polar residues" evidence="5">
    <location>
        <begin position="245"/>
        <end position="254"/>
    </location>
</feature>
<feature type="compositionally biased region" description="Basic and acidic residues" evidence="5">
    <location>
        <begin position="486"/>
        <end position="495"/>
    </location>
</feature>
<feature type="compositionally biased region" description="Pro residues" evidence="5">
    <location>
        <begin position="513"/>
        <end position="531"/>
    </location>
</feature>
<feature type="compositionally biased region" description="Pro residues" evidence="5">
    <location>
        <begin position="539"/>
        <end position="550"/>
    </location>
</feature>
<feature type="compositionally biased region" description="Basic and acidic residues" evidence="5">
    <location>
        <begin position="552"/>
        <end position="563"/>
    </location>
</feature>
<feature type="compositionally biased region" description="Basic residues" evidence="5">
    <location>
        <begin position="621"/>
        <end position="638"/>
    </location>
</feature>
<feature type="compositionally biased region" description="Pro residues" evidence="5">
    <location>
        <begin position="641"/>
        <end position="656"/>
    </location>
</feature>
<feature type="compositionally biased region" description="Low complexity" evidence="5">
    <location>
        <begin position="689"/>
        <end position="708"/>
    </location>
</feature>
<feature type="compositionally biased region" description="Polar residues" evidence="5">
    <location>
        <begin position="1148"/>
        <end position="1162"/>
    </location>
</feature>
<feature type="compositionally biased region" description="Pro residues" evidence="5">
    <location>
        <begin position="1169"/>
        <end position="1179"/>
    </location>
</feature>
<feature type="compositionally biased region" description="Low complexity" evidence="5">
    <location>
        <begin position="1191"/>
        <end position="1201"/>
    </location>
</feature>
<feature type="compositionally biased region" description="Low complexity" evidence="5">
    <location>
        <begin position="1218"/>
        <end position="1227"/>
    </location>
</feature>
<feature type="compositionally biased region" description="Basic residues" evidence="5">
    <location>
        <begin position="1228"/>
        <end position="1240"/>
    </location>
</feature>
<feature type="compositionally biased region" description="Pro residues" evidence="5">
    <location>
        <begin position="1266"/>
        <end position="1307"/>
    </location>
</feature>
<feature type="compositionally biased region" description="Pro residues" evidence="5">
    <location>
        <begin position="1356"/>
        <end position="1368"/>
    </location>
</feature>
<feature type="compositionally biased region" description="Low complexity" evidence="5">
    <location>
        <begin position="1382"/>
        <end position="1391"/>
    </location>
</feature>
<feature type="compositionally biased region" description="Low complexity" evidence="5">
    <location>
        <begin position="1401"/>
        <end position="1416"/>
    </location>
</feature>
<feature type="compositionally biased region" description="Pro residues" evidence="5">
    <location>
        <begin position="1417"/>
        <end position="1447"/>
    </location>
</feature>
<feature type="modified residue" description="Phosphoserine" evidence="10">
    <location>
        <position position="82"/>
    </location>
</feature>
<feature type="modified residue" description="Phosphoserine" evidence="10">
    <location>
        <position position="228"/>
    </location>
</feature>
<feature type="modified residue" description="Phosphoserine" evidence="1">
    <location>
        <position position="334"/>
    </location>
</feature>
<feature type="modified residue" description="Phosphoserine" evidence="9 10">
    <location>
        <position position="383"/>
    </location>
</feature>
<feature type="modified residue" description="Phosphoserine" evidence="9 10">
    <location>
        <position position="402"/>
    </location>
</feature>
<feature type="modified residue" description="Phosphoserine" evidence="10">
    <location>
        <position position="491"/>
    </location>
</feature>
<feature type="modified residue" description="Phosphoserine" evidence="10">
    <location>
        <position position="518"/>
    </location>
</feature>
<feature type="modified residue" description="Phosphoserine" evidence="10">
    <location>
        <position position="597"/>
    </location>
</feature>
<feature type="modified residue" description="Phosphoserine" evidence="10">
    <location>
        <position position="617"/>
    </location>
</feature>
<feature type="modified residue" description="Phosphoserine" evidence="10">
    <location>
        <position position="731"/>
    </location>
</feature>
<feature type="modified residue" description="Phosphoserine" evidence="10">
    <location>
        <position position="734"/>
    </location>
</feature>
<feature type="modified residue" description="Phosphoserine" evidence="1">
    <location>
        <position position="1097"/>
    </location>
</feature>
<feature type="modified residue" description="Phosphotyrosine" evidence="8">
    <location>
        <position position="1119"/>
    </location>
</feature>
<feature type="modified residue" description="Phosphoserine" evidence="1">
    <location>
        <position position="1133"/>
    </location>
</feature>
<feature type="modified residue" description="Phosphoserine" evidence="7 10">
    <location>
        <position position="1148"/>
    </location>
</feature>
<feature type="modified residue" description="Phosphoserine" evidence="7 10">
    <location>
        <position position="1151"/>
    </location>
</feature>
<feature type="modified residue" description="Phosphoserine" evidence="10">
    <location>
        <position position="1162"/>
    </location>
</feature>
<feature type="modified residue" description="Phosphoserine" evidence="10">
    <location>
        <position position="1163"/>
    </location>
</feature>
<feature type="modified residue" description="Omega-N-methylarginine" evidence="11">
    <location>
        <position position="1335"/>
    </location>
</feature>
<feature type="sequence conflict" description="In Ref. 2; BAD90410." evidence="6" ref="2">
    <original>H</original>
    <variation>L</variation>
    <location>
        <position position="833"/>
    </location>
</feature>
<comment type="function">
    <text evidence="1">Is a guanine nucleotide exchange factor for the ARF GTP-binding proteins.</text>
</comment>
<comment type="subcellular location">
    <subcellularLocation>
        <location evidence="6">Cytoplasm</location>
    </subcellularLocation>
</comment>
<comment type="similarity">
    <text evidence="6">Belongs to the BRAG family.</text>
</comment>
<sequence>MEAGSGPPGGPGSESPNRAVEYLLELNNIIESQQQLLETQRRRIEELEGQLDQLTQENRDLREESQLHRGELHRDPLGARDSPGRESQYQNLRETQFHHRELRESQFHQASRDVGYPNRDGAYQNREAIYRDKEREASYQLQDTTGYTARERDVAQCHLHHENPALGRERGGREAGPAHPGREKEAGYSAAVGVGQRPPRERGQLSRGASRSSSPGAGGGHSTSTSTSPATTLQRNVEGDAPGSDLSTAVDSPGSQPPYRLSQLPPTSSHMGGPPAGVGLPWAQRARLQPASVALRKQEEEEIKRSKALSDSYELSTDLQDKKVEMLERKYGGSFLSRRAARTIQTAFRQYRMNKNFERLRSSASESRMSRRIILSNMRMQFSFEEYEKAQNPAYFEGKPASLDEGAMAGARSHRLERGLPYGGSCGGGIDGGGSSVTTSGEFSNDITELEDSFSKQVKSLAESIDEALNCHPSGPMSEEPGSAQLEKRESKEQQEDSSATSFSDLPLYLDDPVPPPSPERLPSTEPPPQGRPEFWAPAPLPPVPPPMPPGTREDGSREEGTRRGPGCLECRDFRLRAAHLPLLTIEPPSDSSVDLSDRSDRGSVHRQLVYEADGCSPHGTLKHKGPPGRAPIPHRHYPAPEGPAPAPPGPLPPAPNSGTGPSGVAGGRRLGKCEAAGENSDGGDNESLESSSNSNETINCSSGSSSRDSLREPPATGLCKQTYQRETRHSWDSPAFNNDVVQRRHYRIGLNLFNKKPEKGIQYLIERGFLSDTPVGVAHFILERKGLSRQMIGEFLGNRQKQFNRDVLDCVVDEMDFSSMDLDDALRKFQSHIRVQGEAQKVERLIEAFSQRYCVCNPALVRQFRNPDTIFILAFAIILLNTDMYSPSVKAERKMKLDDFIKNLRGVDNGEDIPRDLLVGIYQRIQGRELRTNDDHVSQVQAVERMIVGKKPVLSLPHRRLVCCCQLYEVPDPNRPQRLGLHQREVFLFNDLLVVTKIFQKKKILVTYSFRQSFPLVEMHMQLFQNSYYQFGIKLLSAVPGGERKVLIIFNAPSLQDRLRFTSDLRESIAEVQEMEKYRVESELEKQKGMMRPNASQPGGAKDSVNGTLARSSLEDTYGAGDGLKRGALSSSLRDLSDAGKRGRRNSVGSLDSTIEGSVISSPRPHQRMPPPPPPPPPEEYKSQRPVSNSSSFLGSLFGSKRGKGPFQMPPPPTGQASASSSSASSTHHHHHHHHHGHSHGGLGVLPDGQSKLQALHAQYCQGPGPAPPPYLPPQQPPLPPPPQQPPPLPQLGSIPPPPASAPPVGPHRHFHAHGPVPGPQHYTLGRPGRAPRRGAGGHPQFAPHGRHPLHQPTSPLPLYSPAPQHPPAHKQGPKHFIFSHHPQMMPAAGAAGGPGSRPPGGSYSHPHHPQSPLSPHSPIPPHPSYPPLPPPSPHTPHSPLPPTSPHGPLHASGPPGTANPPSANPKAKPSRISTVV</sequence>
<dbReference type="EMBL" id="AC083816">
    <property type="status" value="NOT_ANNOTATED_CDS"/>
    <property type="molecule type" value="Genomic_DNA"/>
</dbReference>
<dbReference type="EMBL" id="AK220345">
    <property type="protein sequence ID" value="BAD90410.1"/>
    <property type="molecule type" value="mRNA"/>
</dbReference>
<dbReference type="RefSeq" id="XP_006528908.1">
    <property type="nucleotide sequence ID" value="XM_006528845.2"/>
</dbReference>
<dbReference type="SMR" id="Q5DU25"/>
<dbReference type="BioGRID" id="232821">
    <property type="interactions" value="13"/>
</dbReference>
<dbReference type="FunCoup" id="Q5DU25">
    <property type="interactions" value="354"/>
</dbReference>
<dbReference type="IntAct" id="Q5DU25">
    <property type="interactions" value="8"/>
</dbReference>
<dbReference type="MINT" id="Q5DU25"/>
<dbReference type="STRING" id="10090.ENSMUSP00000127249"/>
<dbReference type="GlyGen" id="Q5DU25">
    <property type="glycosylation" value="3 sites, 1 N-linked glycan (1 site), 1 O-linked glycan (2 sites)"/>
</dbReference>
<dbReference type="iPTMnet" id="Q5DU25"/>
<dbReference type="PhosphoSitePlus" id="Q5DU25"/>
<dbReference type="SwissPalm" id="Q5DU25"/>
<dbReference type="jPOST" id="Q5DU25"/>
<dbReference type="PaxDb" id="10090-ENSMUSP00000093995"/>
<dbReference type="ProteomicsDB" id="301667"/>
<dbReference type="Pumba" id="Q5DU25"/>
<dbReference type="DNASU" id="245666"/>
<dbReference type="GeneID" id="245666"/>
<dbReference type="AGR" id="MGI:3528396"/>
<dbReference type="CTD" id="23096"/>
<dbReference type="MGI" id="MGI:3528396">
    <property type="gene designation" value="Iqsec2"/>
</dbReference>
<dbReference type="eggNOG" id="KOG0931">
    <property type="taxonomic scope" value="Eukaryota"/>
</dbReference>
<dbReference type="InParanoid" id="Q5DU25"/>
<dbReference type="OrthoDB" id="430364at2759"/>
<dbReference type="BioGRID-ORCS" id="245666">
    <property type="hits" value="1 hit in 76 CRISPR screens"/>
</dbReference>
<dbReference type="CD-CODE" id="CE726F99">
    <property type="entry name" value="Postsynaptic density"/>
</dbReference>
<dbReference type="ChiTaRS" id="Iqsec2">
    <property type="organism name" value="mouse"/>
</dbReference>
<dbReference type="PRO" id="PR:Q5DU25"/>
<dbReference type="Proteomes" id="UP000000589">
    <property type="component" value="Unplaced"/>
</dbReference>
<dbReference type="RNAct" id="Q5DU25">
    <property type="molecule type" value="protein"/>
</dbReference>
<dbReference type="GO" id="GO:0098978">
    <property type="term" value="C:glutamatergic synapse"/>
    <property type="evidence" value="ECO:0000314"/>
    <property type="project" value="SynGO"/>
</dbReference>
<dbReference type="GO" id="GO:0098684">
    <property type="term" value="C:photoreceptor ribbon synapse"/>
    <property type="evidence" value="ECO:0000314"/>
    <property type="project" value="SynGO"/>
</dbReference>
<dbReference type="GO" id="GO:0098839">
    <property type="term" value="C:postsynaptic density membrane"/>
    <property type="evidence" value="ECO:0000314"/>
    <property type="project" value="SynGO"/>
</dbReference>
<dbReference type="GO" id="GO:0099092">
    <property type="term" value="C:postsynaptic density, intracellular component"/>
    <property type="evidence" value="ECO:0000314"/>
    <property type="project" value="SynGO"/>
</dbReference>
<dbReference type="GO" id="GO:0098831">
    <property type="term" value="C:presynaptic active zone cytoplasmic component"/>
    <property type="evidence" value="ECO:0000314"/>
    <property type="project" value="SynGO"/>
</dbReference>
<dbReference type="GO" id="GO:0005085">
    <property type="term" value="F:guanyl-nucleotide exchange factor activity"/>
    <property type="evidence" value="ECO:0007669"/>
    <property type="project" value="InterPro"/>
</dbReference>
<dbReference type="GO" id="GO:0032012">
    <property type="term" value="P:regulation of ARF protein signal transduction"/>
    <property type="evidence" value="ECO:0007669"/>
    <property type="project" value="InterPro"/>
</dbReference>
<dbReference type="CDD" id="cd13318">
    <property type="entry name" value="PH_IQSEC"/>
    <property type="match status" value="1"/>
</dbReference>
<dbReference type="CDD" id="cd00171">
    <property type="entry name" value="Sec7"/>
    <property type="match status" value="1"/>
</dbReference>
<dbReference type="FunFam" id="1.10.1000.11:FF:000001">
    <property type="entry name" value="IQ motif and SEC7 domain-containing protein 1"/>
    <property type="match status" value="1"/>
</dbReference>
<dbReference type="FunFam" id="1.10.220.20:FF:000001">
    <property type="entry name" value="IQ motif and SEC7 domain-containing protein 1"/>
    <property type="match status" value="1"/>
</dbReference>
<dbReference type="FunFam" id="2.30.29.30:FF:000004">
    <property type="entry name" value="IQ motif and SEC7 domain-containing protein 1"/>
    <property type="match status" value="1"/>
</dbReference>
<dbReference type="Gene3D" id="1.10.220.20">
    <property type="match status" value="1"/>
</dbReference>
<dbReference type="Gene3D" id="1.10.1000.11">
    <property type="entry name" value="Arf Nucleotide-binding Site Opener,domain 2"/>
    <property type="match status" value="1"/>
</dbReference>
<dbReference type="Gene3D" id="2.30.29.30">
    <property type="entry name" value="Pleckstrin-homology domain (PH domain)/Phosphotyrosine-binding domain (PTB)"/>
    <property type="match status" value="1"/>
</dbReference>
<dbReference type="InterPro" id="IPR033742">
    <property type="entry name" value="IQSEC_PH"/>
</dbReference>
<dbReference type="InterPro" id="IPR011993">
    <property type="entry name" value="PH-like_dom_sf"/>
</dbReference>
<dbReference type="InterPro" id="IPR001849">
    <property type="entry name" value="PH_domain"/>
</dbReference>
<dbReference type="InterPro" id="IPR023394">
    <property type="entry name" value="Sec7_C_sf"/>
</dbReference>
<dbReference type="InterPro" id="IPR000904">
    <property type="entry name" value="Sec7_dom"/>
</dbReference>
<dbReference type="InterPro" id="IPR035999">
    <property type="entry name" value="Sec7_dom_sf"/>
</dbReference>
<dbReference type="PANTHER" id="PTHR10663">
    <property type="entry name" value="GUANYL-NUCLEOTIDE EXCHANGE FACTOR"/>
    <property type="match status" value="1"/>
</dbReference>
<dbReference type="PANTHER" id="PTHR10663:SF314">
    <property type="entry name" value="IQ MOTIF AND SEC7 DOMAIN-CONTAINING PROTEIN 2"/>
    <property type="match status" value="1"/>
</dbReference>
<dbReference type="Pfam" id="PF16453">
    <property type="entry name" value="IQ_SEC7_PH"/>
    <property type="match status" value="1"/>
</dbReference>
<dbReference type="Pfam" id="PF01369">
    <property type="entry name" value="Sec7"/>
    <property type="match status" value="1"/>
</dbReference>
<dbReference type="SMART" id="SM00233">
    <property type="entry name" value="PH"/>
    <property type="match status" value="1"/>
</dbReference>
<dbReference type="SMART" id="SM00222">
    <property type="entry name" value="Sec7"/>
    <property type="match status" value="1"/>
</dbReference>
<dbReference type="SUPFAM" id="SSF50729">
    <property type="entry name" value="PH domain-like"/>
    <property type="match status" value="1"/>
</dbReference>
<dbReference type="SUPFAM" id="SSF48425">
    <property type="entry name" value="Sec7 domain"/>
    <property type="match status" value="1"/>
</dbReference>
<dbReference type="PROSITE" id="PS50096">
    <property type="entry name" value="IQ"/>
    <property type="match status" value="1"/>
</dbReference>
<dbReference type="PROSITE" id="PS50190">
    <property type="entry name" value="SEC7"/>
    <property type="match status" value="1"/>
</dbReference>
<proteinExistence type="evidence at protein level"/>
<accession>Q5DU25</accession>
<accession>E9QK46</accession>
<evidence type="ECO:0000250" key="1">
    <source>
        <dbReference type="UniProtKB" id="Q5JU85"/>
    </source>
</evidence>
<evidence type="ECO:0000255" key="2"/>
<evidence type="ECO:0000255" key="3">
    <source>
        <dbReference type="PROSITE-ProRule" id="PRU00116"/>
    </source>
</evidence>
<evidence type="ECO:0000255" key="4">
    <source>
        <dbReference type="PROSITE-ProRule" id="PRU00189"/>
    </source>
</evidence>
<evidence type="ECO:0000256" key="5">
    <source>
        <dbReference type="SAM" id="MobiDB-lite"/>
    </source>
</evidence>
<evidence type="ECO:0000305" key="6"/>
<evidence type="ECO:0007744" key="7">
    <source>
    </source>
</evidence>
<evidence type="ECO:0007744" key="8">
    <source>
    </source>
</evidence>
<evidence type="ECO:0007744" key="9">
    <source>
    </source>
</evidence>
<evidence type="ECO:0007744" key="10">
    <source>
    </source>
</evidence>
<evidence type="ECO:0007744" key="11">
    <source>
    </source>
</evidence>
<protein>
    <recommendedName>
        <fullName>IQ motif and SEC7 domain-containing protein 2</fullName>
    </recommendedName>
</protein>
<organism>
    <name type="scientific">Mus musculus</name>
    <name type="common">Mouse</name>
    <dbReference type="NCBI Taxonomy" id="10090"/>
    <lineage>
        <taxon>Eukaryota</taxon>
        <taxon>Metazoa</taxon>
        <taxon>Chordata</taxon>
        <taxon>Craniata</taxon>
        <taxon>Vertebrata</taxon>
        <taxon>Euteleostomi</taxon>
        <taxon>Mammalia</taxon>
        <taxon>Eutheria</taxon>
        <taxon>Euarchontoglires</taxon>
        <taxon>Glires</taxon>
        <taxon>Rodentia</taxon>
        <taxon>Myomorpha</taxon>
        <taxon>Muroidea</taxon>
        <taxon>Muridae</taxon>
        <taxon>Murinae</taxon>
        <taxon>Mus</taxon>
        <taxon>Mus</taxon>
    </lineage>
</organism>